<name>RS11_MYCCT</name>
<organism>
    <name type="scientific">Mycoplasma capricolum subsp. capricolum (strain California kid / ATCC 27343 / NCTC 10154)</name>
    <dbReference type="NCBI Taxonomy" id="340047"/>
    <lineage>
        <taxon>Bacteria</taxon>
        <taxon>Bacillati</taxon>
        <taxon>Mycoplasmatota</taxon>
        <taxon>Mollicutes</taxon>
        <taxon>Mycoplasmataceae</taxon>
        <taxon>Mycoplasma</taxon>
    </lineage>
</organism>
<gene>
    <name evidence="1" type="primary">rpsK</name>
    <name type="ordered locus">MCAP_0671</name>
</gene>
<proteinExistence type="inferred from homology"/>
<sequence length="129" mass="13564">MANPKPQAKKKIKKNIPKGIAHIHSTFNNTIVTVSDEKGNVLSWSSAGAIGFKGSKKSTPYAAQLISEAAAKGAMDNGVKTVSVEVKGPGPGRDAAIRALQMAGLEITSIKDTTPIPHNGVRPRKRPRG</sequence>
<comment type="function">
    <text evidence="1">Located on the platform of the 30S subunit, it bridges several disparate RNA helices of the 16S rRNA. Forms part of the Shine-Dalgarno cleft in the 70S ribosome.</text>
</comment>
<comment type="subunit">
    <text evidence="1">Part of the 30S ribosomal subunit. Interacts with proteins S7 and S18. Binds to IF-3.</text>
</comment>
<comment type="similarity">
    <text evidence="1">Belongs to the universal ribosomal protein uS11 family.</text>
</comment>
<feature type="chain" id="PRO_0000230408" description="Small ribosomal subunit protein uS11">
    <location>
        <begin position="1"/>
        <end position="129"/>
    </location>
</feature>
<accession>Q2SRH8</accession>
<reference key="1">
    <citation type="submission" date="2005-09" db="EMBL/GenBank/DDBJ databases">
        <authorList>
            <person name="Glass J.I."/>
            <person name="Lartigue C."/>
            <person name="Pfannkoch C."/>
            <person name="Baden-Tillson H."/>
            <person name="Smith H.O."/>
            <person name="Venter J.C."/>
            <person name="Roske K."/>
            <person name="Wise K.S."/>
            <person name="Calcutt M.J."/>
            <person name="Nelson W.C."/>
            <person name="Nierman W.C."/>
        </authorList>
    </citation>
    <scope>NUCLEOTIDE SEQUENCE [LARGE SCALE GENOMIC DNA]</scope>
    <source>
        <strain>California kid / ATCC 27343 / NCTC 10154</strain>
    </source>
</reference>
<keyword id="KW-0687">Ribonucleoprotein</keyword>
<keyword id="KW-0689">Ribosomal protein</keyword>
<keyword id="KW-0694">RNA-binding</keyword>
<keyword id="KW-0699">rRNA-binding</keyword>
<dbReference type="EMBL" id="CP000123">
    <property type="protein sequence ID" value="ABC01431.1"/>
    <property type="molecule type" value="Genomic_DNA"/>
</dbReference>
<dbReference type="RefSeq" id="WP_008362476.1">
    <property type="nucleotide sequence ID" value="NC_007633.1"/>
</dbReference>
<dbReference type="SMR" id="Q2SRH8"/>
<dbReference type="GeneID" id="93426157"/>
<dbReference type="KEGG" id="mcp:MCAP_0671"/>
<dbReference type="HOGENOM" id="CLU_072439_5_0_14"/>
<dbReference type="PhylomeDB" id="Q2SRH8"/>
<dbReference type="Proteomes" id="UP000001928">
    <property type="component" value="Chromosome"/>
</dbReference>
<dbReference type="GO" id="GO:1990904">
    <property type="term" value="C:ribonucleoprotein complex"/>
    <property type="evidence" value="ECO:0007669"/>
    <property type="project" value="UniProtKB-KW"/>
</dbReference>
<dbReference type="GO" id="GO:0005840">
    <property type="term" value="C:ribosome"/>
    <property type="evidence" value="ECO:0007669"/>
    <property type="project" value="UniProtKB-KW"/>
</dbReference>
<dbReference type="GO" id="GO:0019843">
    <property type="term" value="F:rRNA binding"/>
    <property type="evidence" value="ECO:0007669"/>
    <property type="project" value="UniProtKB-UniRule"/>
</dbReference>
<dbReference type="GO" id="GO:0003735">
    <property type="term" value="F:structural constituent of ribosome"/>
    <property type="evidence" value="ECO:0007669"/>
    <property type="project" value="InterPro"/>
</dbReference>
<dbReference type="GO" id="GO:0006412">
    <property type="term" value="P:translation"/>
    <property type="evidence" value="ECO:0007669"/>
    <property type="project" value="UniProtKB-UniRule"/>
</dbReference>
<dbReference type="FunFam" id="3.30.420.80:FF:000001">
    <property type="entry name" value="30S ribosomal protein S11"/>
    <property type="match status" value="1"/>
</dbReference>
<dbReference type="Gene3D" id="3.30.420.80">
    <property type="entry name" value="Ribosomal protein S11"/>
    <property type="match status" value="1"/>
</dbReference>
<dbReference type="HAMAP" id="MF_01310">
    <property type="entry name" value="Ribosomal_uS11"/>
    <property type="match status" value="1"/>
</dbReference>
<dbReference type="InterPro" id="IPR001971">
    <property type="entry name" value="Ribosomal_uS11"/>
</dbReference>
<dbReference type="InterPro" id="IPR019981">
    <property type="entry name" value="Ribosomal_uS11_bac-type"/>
</dbReference>
<dbReference type="InterPro" id="IPR018102">
    <property type="entry name" value="Ribosomal_uS11_CS"/>
</dbReference>
<dbReference type="InterPro" id="IPR036967">
    <property type="entry name" value="Ribosomal_uS11_sf"/>
</dbReference>
<dbReference type="NCBIfam" id="NF003698">
    <property type="entry name" value="PRK05309.1"/>
    <property type="match status" value="1"/>
</dbReference>
<dbReference type="NCBIfam" id="TIGR03632">
    <property type="entry name" value="uS11_bact"/>
    <property type="match status" value="1"/>
</dbReference>
<dbReference type="PANTHER" id="PTHR11759">
    <property type="entry name" value="40S RIBOSOMAL PROTEIN S14/30S RIBOSOMAL PROTEIN S11"/>
    <property type="match status" value="1"/>
</dbReference>
<dbReference type="Pfam" id="PF00411">
    <property type="entry name" value="Ribosomal_S11"/>
    <property type="match status" value="1"/>
</dbReference>
<dbReference type="PIRSF" id="PIRSF002131">
    <property type="entry name" value="Ribosomal_S11"/>
    <property type="match status" value="1"/>
</dbReference>
<dbReference type="SUPFAM" id="SSF53137">
    <property type="entry name" value="Translational machinery components"/>
    <property type="match status" value="1"/>
</dbReference>
<dbReference type="PROSITE" id="PS00054">
    <property type="entry name" value="RIBOSOMAL_S11"/>
    <property type="match status" value="1"/>
</dbReference>
<protein>
    <recommendedName>
        <fullName evidence="1">Small ribosomal subunit protein uS11</fullName>
    </recommendedName>
    <alternativeName>
        <fullName evidence="2">30S ribosomal protein S11</fullName>
    </alternativeName>
</protein>
<evidence type="ECO:0000255" key="1">
    <source>
        <dbReference type="HAMAP-Rule" id="MF_01310"/>
    </source>
</evidence>
<evidence type="ECO:0000305" key="2"/>